<feature type="chain" id="PRO_0000438207" description="Protein FLOURY 1-like">
    <location>
        <begin position="1"/>
        <end position="280"/>
    </location>
</feature>
<feature type="transmembrane region" description="Helical" evidence="1">
    <location>
        <begin position="22"/>
        <end position="42"/>
    </location>
</feature>
<feature type="domain" description="GTD-binding" evidence="2">
    <location>
        <begin position="188"/>
        <end position="280"/>
    </location>
</feature>
<feature type="region of interest" description="Disordered" evidence="3">
    <location>
        <begin position="153"/>
        <end position="187"/>
    </location>
</feature>
<feature type="compositionally biased region" description="Acidic residues" evidence="3">
    <location>
        <begin position="169"/>
        <end position="187"/>
    </location>
</feature>
<comment type="subcellular location">
    <subcellularLocation>
        <location evidence="1">Membrane</location>
        <topology evidence="1">Single-pass membrane protein</topology>
    </subcellularLocation>
</comment>
<comment type="sequence caution" evidence="4">
    <conflict type="erroneous gene model prediction">
        <sequence resource="EMBL-CDS" id="AAF25991"/>
    </conflict>
</comment>
<keyword id="KW-0472">Membrane</keyword>
<keyword id="KW-1185">Reference proteome</keyword>
<keyword id="KW-0812">Transmembrane</keyword>
<keyword id="KW-1133">Transmembrane helix</keyword>
<protein>
    <recommendedName>
        <fullName evidence="4">Protein FLOURY 1-like</fullName>
    </recommendedName>
</protein>
<reference key="1">
    <citation type="journal article" date="2000" name="Nature">
        <title>Sequence and analysis of chromosome 1 of the plant Arabidopsis thaliana.</title>
        <authorList>
            <person name="Theologis A."/>
            <person name="Ecker J.R."/>
            <person name="Palm C.J."/>
            <person name="Federspiel N.A."/>
            <person name="Kaul S."/>
            <person name="White O."/>
            <person name="Alonso J."/>
            <person name="Altafi H."/>
            <person name="Araujo R."/>
            <person name="Bowman C.L."/>
            <person name="Brooks S.Y."/>
            <person name="Buehler E."/>
            <person name="Chan A."/>
            <person name="Chao Q."/>
            <person name="Chen H."/>
            <person name="Cheuk R.F."/>
            <person name="Chin C.W."/>
            <person name="Chung M.K."/>
            <person name="Conn L."/>
            <person name="Conway A.B."/>
            <person name="Conway A.R."/>
            <person name="Creasy T.H."/>
            <person name="Dewar K."/>
            <person name="Dunn P."/>
            <person name="Etgu P."/>
            <person name="Feldblyum T.V."/>
            <person name="Feng J.-D."/>
            <person name="Fong B."/>
            <person name="Fujii C.Y."/>
            <person name="Gill J.E."/>
            <person name="Goldsmith A.D."/>
            <person name="Haas B."/>
            <person name="Hansen N.F."/>
            <person name="Hughes B."/>
            <person name="Huizar L."/>
            <person name="Hunter J.L."/>
            <person name="Jenkins J."/>
            <person name="Johnson-Hopson C."/>
            <person name="Khan S."/>
            <person name="Khaykin E."/>
            <person name="Kim C.J."/>
            <person name="Koo H.L."/>
            <person name="Kremenetskaia I."/>
            <person name="Kurtz D.B."/>
            <person name="Kwan A."/>
            <person name="Lam B."/>
            <person name="Langin-Hooper S."/>
            <person name="Lee A."/>
            <person name="Lee J.M."/>
            <person name="Lenz C.A."/>
            <person name="Li J.H."/>
            <person name="Li Y.-P."/>
            <person name="Lin X."/>
            <person name="Liu S.X."/>
            <person name="Liu Z.A."/>
            <person name="Luros J.S."/>
            <person name="Maiti R."/>
            <person name="Marziali A."/>
            <person name="Militscher J."/>
            <person name="Miranda M."/>
            <person name="Nguyen M."/>
            <person name="Nierman W.C."/>
            <person name="Osborne B.I."/>
            <person name="Pai G."/>
            <person name="Peterson J."/>
            <person name="Pham P.K."/>
            <person name="Rizzo M."/>
            <person name="Rooney T."/>
            <person name="Rowley D."/>
            <person name="Sakano H."/>
            <person name="Salzberg S.L."/>
            <person name="Schwartz J.R."/>
            <person name="Shinn P."/>
            <person name="Southwick A.M."/>
            <person name="Sun H."/>
            <person name="Tallon L.J."/>
            <person name="Tambunga G."/>
            <person name="Toriumi M.J."/>
            <person name="Town C.D."/>
            <person name="Utterback T."/>
            <person name="Van Aken S."/>
            <person name="Vaysberg M."/>
            <person name="Vysotskaia V.S."/>
            <person name="Walker M."/>
            <person name="Wu D."/>
            <person name="Yu G."/>
            <person name="Fraser C.M."/>
            <person name="Venter J.C."/>
            <person name="Davis R.W."/>
        </authorList>
    </citation>
    <scope>NUCLEOTIDE SEQUENCE [LARGE SCALE GENOMIC DNA]</scope>
    <source>
        <strain>cv. Columbia</strain>
    </source>
</reference>
<reference key="2">
    <citation type="journal article" date="2017" name="Plant J.">
        <title>Araport11: a complete reannotation of the Arabidopsis thaliana reference genome.</title>
        <authorList>
            <person name="Cheng C.Y."/>
            <person name="Krishnakumar V."/>
            <person name="Chan A.P."/>
            <person name="Thibaud-Nissen F."/>
            <person name="Schobel S."/>
            <person name="Town C.D."/>
        </authorList>
    </citation>
    <scope>GENOME REANNOTATION</scope>
    <source>
        <strain>cv. Columbia</strain>
    </source>
</reference>
<reference key="3">
    <citation type="journal article" date="2004" name="Genome Res.">
        <title>Whole genome sequence comparisons and 'full-length' cDNA sequences: a combined approach to evaluate and improve Arabidopsis genome annotation.</title>
        <authorList>
            <person name="Castelli V."/>
            <person name="Aury J.-M."/>
            <person name="Jaillon O."/>
            <person name="Wincker P."/>
            <person name="Clepet C."/>
            <person name="Menard M."/>
            <person name="Cruaud C."/>
            <person name="Quetier F."/>
            <person name="Scarpelli C."/>
            <person name="Schaechter V."/>
            <person name="Temple G."/>
            <person name="Caboche M."/>
            <person name="Weissenbach J."/>
            <person name="Salanoubat M."/>
        </authorList>
    </citation>
    <scope>NUCLEOTIDE SEQUENCE [LARGE SCALE MRNA]</scope>
    <source>
        <strain>cv. Columbia</strain>
        <tissue>Silique</tissue>
    </source>
</reference>
<proteinExistence type="evidence at transcript level"/>
<name>FL1L_ARATH</name>
<accession>Q9LM24</accession>
<accession>Q9LPP7</accession>
<evidence type="ECO:0000255" key="1"/>
<evidence type="ECO:0000255" key="2">
    <source>
        <dbReference type="PROSITE-ProRule" id="PRU01111"/>
    </source>
</evidence>
<evidence type="ECO:0000256" key="3">
    <source>
        <dbReference type="SAM" id="MobiDB-lite"/>
    </source>
</evidence>
<evidence type="ECO:0000305" key="4"/>
<evidence type="ECO:0000312" key="5">
    <source>
        <dbReference type="Araport" id="AT1G18265"/>
    </source>
</evidence>
<evidence type="ECO:0000312" key="6">
    <source>
        <dbReference type="EMBL" id="AAF25991.1"/>
    </source>
</evidence>
<evidence type="ECO:0000312" key="7">
    <source>
        <dbReference type="EMBL" id="AAF78380.1"/>
    </source>
</evidence>
<gene>
    <name evidence="5" type="ordered locus">At1g18265</name>
    <name evidence="6" type="ORF">F15H18.23</name>
    <name evidence="7" type="ORF">T10O22.23</name>
</gene>
<sequence length="280" mass="32809">MDVYFFVMEITSFLKLLSQTDGFGFGIFVIGCSSQFFNLVFLCCLLLLGLKFLSFKGTSLFLQYLEKINRISPNIEFFNSFNREHKDCNNNNNNNNNNNGFISKSHLADGLDQKKPIILHWSSDSTNRLSWENCDLLLLRDGLDHIQNRENTVALSETELDEKNHHGEEEESEDEEESQSQNDEDQLLDVITLRTMVKRERKRGDYMKKELEKERRAAESAAEEAMAMLLKLRMEKSVVEMETKQYKRVAEQKQVYDQEVIQSLQWMLMKLDDDEDKIQM</sequence>
<organism>
    <name type="scientific">Arabidopsis thaliana</name>
    <name type="common">Mouse-ear cress</name>
    <dbReference type="NCBI Taxonomy" id="3702"/>
    <lineage>
        <taxon>Eukaryota</taxon>
        <taxon>Viridiplantae</taxon>
        <taxon>Streptophyta</taxon>
        <taxon>Embryophyta</taxon>
        <taxon>Tracheophyta</taxon>
        <taxon>Spermatophyta</taxon>
        <taxon>Magnoliopsida</taxon>
        <taxon>eudicotyledons</taxon>
        <taxon>Gunneridae</taxon>
        <taxon>Pentapetalae</taxon>
        <taxon>rosids</taxon>
        <taxon>malvids</taxon>
        <taxon>Brassicales</taxon>
        <taxon>Brassicaceae</taxon>
        <taxon>Camelineae</taxon>
        <taxon>Arabidopsis</taxon>
    </lineage>
</organism>
<dbReference type="EMBL" id="AC013354">
    <property type="protein sequence ID" value="AAF25991.1"/>
    <property type="status" value="ALT_SEQ"/>
    <property type="molecule type" value="Genomic_DNA"/>
</dbReference>
<dbReference type="EMBL" id="AC069551">
    <property type="protein sequence ID" value="AAF78380.1"/>
    <property type="molecule type" value="Genomic_DNA"/>
</dbReference>
<dbReference type="EMBL" id="CP002684">
    <property type="protein sequence ID" value="AEE29693.1"/>
    <property type="molecule type" value="Genomic_DNA"/>
</dbReference>
<dbReference type="EMBL" id="BX818727">
    <property type="status" value="NOT_ANNOTATED_CDS"/>
    <property type="molecule type" value="mRNA"/>
</dbReference>
<dbReference type="PIR" id="C86317">
    <property type="entry name" value="C86317"/>
</dbReference>
<dbReference type="RefSeq" id="NP_973856.1">
    <property type="nucleotide sequence ID" value="NM_202127.3"/>
</dbReference>
<dbReference type="SMR" id="Q9LM24"/>
<dbReference type="FunCoup" id="Q9LM24">
    <property type="interactions" value="12"/>
</dbReference>
<dbReference type="PaxDb" id="3702-AT1G18265.1"/>
<dbReference type="EnsemblPlants" id="AT1G18265.1">
    <property type="protein sequence ID" value="AT1G18265.1"/>
    <property type="gene ID" value="AT1G18265"/>
</dbReference>
<dbReference type="GeneID" id="2745754"/>
<dbReference type="Gramene" id="AT1G18265.1">
    <property type="protein sequence ID" value="AT1G18265.1"/>
    <property type="gene ID" value="AT1G18265"/>
</dbReference>
<dbReference type="KEGG" id="ath:AT1G18265"/>
<dbReference type="Araport" id="AT1G18265"/>
<dbReference type="TAIR" id="AT1G18265"/>
<dbReference type="eggNOG" id="KOG1550">
    <property type="taxonomic scope" value="Eukaryota"/>
</dbReference>
<dbReference type="HOGENOM" id="CLU_089460_0_0_1"/>
<dbReference type="InParanoid" id="Q9LM24"/>
<dbReference type="OMA" id="HWNPDSA"/>
<dbReference type="PRO" id="PR:Q9LM24"/>
<dbReference type="Proteomes" id="UP000006548">
    <property type="component" value="Chromosome 1"/>
</dbReference>
<dbReference type="ExpressionAtlas" id="Q9LM24">
    <property type="expression patterns" value="baseline and differential"/>
</dbReference>
<dbReference type="GO" id="GO:0016020">
    <property type="term" value="C:membrane"/>
    <property type="evidence" value="ECO:0007669"/>
    <property type="project" value="UniProtKB-SubCell"/>
</dbReference>
<dbReference type="GO" id="GO:0080115">
    <property type="term" value="F:myosin XI tail binding"/>
    <property type="evidence" value="ECO:0007669"/>
    <property type="project" value="UniProtKB-ARBA"/>
</dbReference>
<dbReference type="InterPro" id="IPR007656">
    <property type="entry name" value="GTD-bd"/>
</dbReference>
<dbReference type="PANTHER" id="PTHR31422">
    <property type="entry name" value="BNAANNG28530D PROTEIN"/>
    <property type="match status" value="1"/>
</dbReference>
<dbReference type="PANTHER" id="PTHR31422:SF2">
    <property type="entry name" value="PROTEIN FLOURY 1-LIKE"/>
    <property type="match status" value="1"/>
</dbReference>
<dbReference type="Pfam" id="PF04576">
    <property type="entry name" value="Zein-binding"/>
    <property type="match status" value="1"/>
</dbReference>
<dbReference type="PROSITE" id="PS51775">
    <property type="entry name" value="GTD_BINDING"/>
    <property type="match status" value="1"/>
</dbReference>